<proteinExistence type="evidence at protein level"/>
<sequence>MSIYDDIFKQFPTIDEWSESNEKIMLEPYTHLGINTAKELPSMVTKAFNHWYQVPQPALDIILQIVGPIHAACLLIDDIQDDSDLRGGNPVAHKVYGVAQTINTATYVCFDAYHKISKLTPFSKSPETTDLWSIINDEIAALHRGQWIDLYWRDSLICPTEEEYLRMIHNKTGAIFRLPIKLLQALSPVDSPPDCFPLVNVVGILVQIRNDLLSLSPDFTKDKGFCEDFSEGKFSFPIIHSVKADSSNSLLIDILRLRPKDEPTKRKALRYMKDQTKSLDHTFDVLCKLEKTAKEELEKLGGNSELSSILELIQVSPIPEIADR</sequence>
<keyword id="KW-0456">Lyase</keyword>
<keyword id="KW-0460">Magnesium</keyword>
<keyword id="KW-0479">Metal-binding</keyword>
<keyword id="KW-0808">Transferase</keyword>
<reference key="1">
    <citation type="journal article" date="2020" name="Sci. Rep.">
        <title>Evolution of isoprenyl diphosphate synthase-like terpene synthases in fungi.</title>
        <authorList>
            <person name="Wei G."/>
            <person name="Eberl F."/>
            <person name="Chen X."/>
            <person name="Zhang C."/>
            <person name="Unsicker S.B."/>
            <person name="Koellner T.G."/>
            <person name="Gershenzon J."/>
            <person name="Chen F."/>
        </authorList>
    </citation>
    <scope>NUCLEOTIDE SEQUENCE [MRNA]</scope>
    <scope>FUNCTION</scope>
    <scope>CATALYTIC ACTIVITY</scope>
    <scope>BIOPHYSICOCHEMICAL PROPERTIES</scope>
</reference>
<name>TPS2_MELLI</name>
<organism>
    <name type="scientific">Melampsora lini</name>
    <name type="common">Rust fungus</name>
    <dbReference type="NCBI Taxonomy" id="5261"/>
    <lineage>
        <taxon>Eukaryota</taxon>
        <taxon>Fungi</taxon>
        <taxon>Dikarya</taxon>
        <taxon>Basidiomycota</taxon>
        <taxon>Pucciniomycotina</taxon>
        <taxon>Pucciniomycetes</taxon>
        <taxon>Pucciniales</taxon>
        <taxon>Melampsoraceae</taxon>
        <taxon>Melampsora</taxon>
    </lineage>
</organism>
<protein>
    <recommendedName>
        <fullName evidence="3">IDS-like terpene synthase 2</fullName>
        <shortName evidence="3">ILTPS2</shortName>
        <ecNumber evidence="2">4.2.3.106</ecNumber>
        <ecNumber evidence="2">4.2.3.46</ecNumber>
    </recommendedName>
</protein>
<feature type="chain" id="PRO_0000457155" description="IDS-like terpene synthase 2">
    <location>
        <begin position="1"/>
        <end position="324"/>
    </location>
</feature>
<feature type="binding site" evidence="1">
    <location>
        <position position="77"/>
    </location>
    <ligand>
        <name>Mg(2+)</name>
        <dbReference type="ChEBI" id="CHEBI:18420"/>
        <label>1</label>
    </ligand>
</feature>
<feature type="binding site" evidence="1">
    <location>
        <position position="77"/>
    </location>
    <ligand>
        <name>Mg(2+)</name>
        <dbReference type="ChEBI" id="CHEBI:18420"/>
        <label>2</label>
    </ligand>
</feature>
<feature type="binding site" evidence="1">
    <location>
        <position position="81"/>
    </location>
    <ligand>
        <name>Mg(2+)</name>
        <dbReference type="ChEBI" id="CHEBI:18420"/>
        <label>1</label>
    </ligand>
</feature>
<feature type="binding site" evidence="1">
    <location>
        <position position="81"/>
    </location>
    <ligand>
        <name>Mg(2+)</name>
        <dbReference type="ChEBI" id="CHEBI:18420"/>
        <label>2</label>
    </ligand>
</feature>
<gene>
    <name evidence="3" type="primary">ILTPS2</name>
</gene>
<comment type="function">
    <text evidence="2">Terpene synthase that shows monoterpene synthase activity and produces (E)-beta-ocimene as a major product, using geranyl diphosphate (GPP) as substrate (PubMed:32913319). Also shows sesquiterpene synthase activity as it is able to convert farnesyl diphosphate (FPP) into (E,E)-alpha-farnesene (PubMed:32913319). Finally, TPS2 can convert geranylgeranyl diphosphate into (E,E,E)-alpha-springene (PubMed:32913319).</text>
</comment>
<comment type="catalytic activity">
    <reaction evidence="2">
        <text>(2E)-geranyl diphosphate = (E)-beta-ocimene + diphosphate</text>
        <dbReference type="Rhea" id="RHEA:32691"/>
        <dbReference type="ChEBI" id="CHEBI:33019"/>
        <dbReference type="ChEBI" id="CHEBI:58057"/>
        <dbReference type="ChEBI" id="CHEBI:64280"/>
        <dbReference type="EC" id="4.2.3.106"/>
    </reaction>
    <physiologicalReaction direction="left-to-right" evidence="2">
        <dbReference type="Rhea" id="RHEA:32692"/>
    </physiologicalReaction>
</comment>
<comment type="catalytic activity">
    <reaction evidence="2">
        <text>(2E,6E)-farnesyl diphosphate = (3E,6E)-alpha-farnesene + diphosphate</text>
        <dbReference type="Rhea" id="RHEA:27421"/>
        <dbReference type="ChEBI" id="CHEBI:10280"/>
        <dbReference type="ChEBI" id="CHEBI:33019"/>
        <dbReference type="ChEBI" id="CHEBI:175763"/>
        <dbReference type="EC" id="4.2.3.46"/>
    </reaction>
    <physiologicalReaction direction="left-to-right" evidence="2">
        <dbReference type="Rhea" id="RHEA:27422"/>
    </physiologicalReaction>
</comment>
<comment type="catalytic activity">
    <reaction evidence="2">
        <text>(2E,6E,10E)-geranylgeranyl diphosphate = (E,E,E)-alpha-springene + diphosphate</text>
        <dbReference type="Rhea" id="RHEA:74543"/>
        <dbReference type="ChEBI" id="CHEBI:33019"/>
        <dbReference type="ChEBI" id="CHEBI:58756"/>
        <dbReference type="ChEBI" id="CHEBI:192746"/>
    </reaction>
    <physiologicalReaction direction="left-to-right" evidence="2">
        <dbReference type="Rhea" id="RHEA:74544"/>
    </physiologicalReaction>
</comment>
<comment type="cofactor">
    <cofactor evidence="1">
        <name>Mg(2+)</name>
        <dbReference type="ChEBI" id="CHEBI:18420"/>
    </cofactor>
    <text evidence="1">Binds 2 Mg(2+) ions per subunit.</text>
</comment>
<comment type="biophysicochemical properties">
    <kinetics>
        <KM evidence="2">1.9 uM for farnesyl diphosphate</KM>
    </kinetics>
</comment>
<comment type="miscellaneous">
    <text evidence="2">IDS-like terpene synthases originate from a geranylgeranyl diphosphate synthase (GGDPS) progenitor in fungi, after the split of Melampsora from other genera within the class of pucciniomycetes. They lack coupling activity and act as classical terpene synthases.</text>
</comment>
<comment type="similarity">
    <text evidence="4">Belongs to the FPP/GGPP synthase family.</text>
</comment>
<dbReference type="EC" id="4.2.3.106" evidence="2"/>
<dbReference type="EC" id="4.2.3.46" evidence="2"/>
<dbReference type="EMBL" id="MK946442">
    <property type="protein sequence ID" value="QIG55794.1"/>
    <property type="molecule type" value="mRNA"/>
</dbReference>
<dbReference type="SMR" id="A0A858EAD5"/>
<dbReference type="GO" id="GO:0016829">
    <property type="term" value="F:lyase activity"/>
    <property type="evidence" value="ECO:0007669"/>
    <property type="project" value="UniProtKB-KW"/>
</dbReference>
<dbReference type="GO" id="GO:0046872">
    <property type="term" value="F:metal ion binding"/>
    <property type="evidence" value="ECO:0007669"/>
    <property type="project" value="UniProtKB-KW"/>
</dbReference>
<dbReference type="GO" id="GO:0004659">
    <property type="term" value="F:prenyltransferase activity"/>
    <property type="evidence" value="ECO:0007669"/>
    <property type="project" value="InterPro"/>
</dbReference>
<dbReference type="GO" id="GO:0008299">
    <property type="term" value="P:isoprenoid biosynthetic process"/>
    <property type="evidence" value="ECO:0007669"/>
    <property type="project" value="InterPro"/>
</dbReference>
<dbReference type="CDD" id="cd00867">
    <property type="entry name" value="Trans_IPPS"/>
    <property type="match status" value="1"/>
</dbReference>
<dbReference type="Gene3D" id="1.10.600.10">
    <property type="entry name" value="Farnesyl Diphosphate Synthase"/>
    <property type="match status" value="1"/>
</dbReference>
<dbReference type="InterPro" id="IPR008949">
    <property type="entry name" value="Isoprenoid_synthase_dom_sf"/>
</dbReference>
<dbReference type="InterPro" id="IPR000092">
    <property type="entry name" value="Polyprenyl_synt"/>
</dbReference>
<dbReference type="PANTHER" id="PTHR12001">
    <property type="entry name" value="GERANYLGERANYL PYROPHOSPHATE SYNTHASE"/>
    <property type="match status" value="1"/>
</dbReference>
<dbReference type="PANTHER" id="PTHR12001:SF44">
    <property type="entry name" value="GERANYLGERANYL PYROPHOSPHATE SYNTHASE"/>
    <property type="match status" value="1"/>
</dbReference>
<dbReference type="Pfam" id="PF00348">
    <property type="entry name" value="polyprenyl_synt"/>
    <property type="match status" value="1"/>
</dbReference>
<dbReference type="SFLD" id="SFLDS00005">
    <property type="entry name" value="Isoprenoid_Synthase_Type_I"/>
    <property type="match status" value="1"/>
</dbReference>
<dbReference type="SUPFAM" id="SSF48576">
    <property type="entry name" value="Terpenoid synthases"/>
    <property type="match status" value="1"/>
</dbReference>
<accession>A0A858EAD5</accession>
<evidence type="ECO:0000250" key="1">
    <source>
        <dbReference type="UniProtKB" id="Q12051"/>
    </source>
</evidence>
<evidence type="ECO:0000269" key="2">
    <source>
    </source>
</evidence>
<evidence type="ECO:0000303" key="3">
    <source>
    </source>
</evidence>
<evidence type="ECO:0000305" key="4"/>